<gene>
    <name type="primary">DNAJC10</name>
    <name type="synonym">ERDJ5</name>
    <name type="ORF">UNQ495/PRO1012</name>
</gene>
<proteinExistence type="evidence at protein level"/>
<reference key="1">
    <citation type="journal article" date="2003" name="J. Biol. Chem.">
        <title>ERdj5, an endoplasmic reticulum (ER)-resident protein containing DnaJ and thioredoxin domains, is expressed in secretory cells or following ER stress.</title>
        <authorList>
            <person name="Cunnea P.M."/>
            <person name="Miranda-Vizuete A."/>
            <person name="Bertoli G."/>
            <person name="Simmen T."/>
            <person name="Damdimopoulos A.E."/>
            <person name="Hermann S."/>
            <person name="Leinonen S."/>
            <person name="Huikko M.P."/>
            <person name="Gustafsson J.-A."/>
            <person name="Sitia R."/>
            <person name="Spyrou G."/>
        </authorList>
    </citation>
    <scope>NUCLEOTIDE SEQUENCE [MRNA] (ISOFORM 1)</scope>
    <scope>FUNCTION</scope>
    <scope>SUBCELLULAR LOCATION</scope>
    <scope>INTERACTION WITH HSPA5</scope>
</reference>
<reference key="2">
    <citation type="journal article" date="2003" name="Biochem. Genet.">
        <title>Cloning and identification of a novel cDNA which encodes a putative protein with a DnaJ domain and a thioredoxin active motif, human macrothioredoxin.</title>
        <authorList>
            <person name="Gu S.-H."/>
            <person name="Chen J.-Z."/>
            <person name="Ying K."/>
            <person name="Wang S."/>
            <person name="Jin W."/>
            <person name="Qian J."/>
            <person name="Zhao E.-P."/>
            <person name="Xie Y."/>
            <person name="Mao Y.-M."/>
        </authorList>
    </citation>
    <scope>NUCLEOTIDE SEQUENCE [MRNA] (ISOFORM 2)</scope>
    <scope>VARIANT ASN-76</scope>
    <source>
        <tissue>Fetal brain</tissue>
    </source>
</reference>
<reference key="3">
    <citation type="journal article" date="2003" name="Genome Res.">
        <title>The secreted protein discovery initiative (SPDI), a large-scale effort to identify novel human secreted and transmembrane proteins: a bioinformatics assessment.</title>
        <authorList>
            <person name="Clark H.F."/>
            <person name="Gurney A.L."/>
            <person name="Abaya E."/>
            <person name="Baker K."/>
            <person name="Baldwin D.T."/>
            <person name="Brush J."/>
            <person name="Chen J."/>
            <person name="Chow B."/>
            <person name="Chui C."/>
            <person name="Crowley C."/>
            <person name="Currell B."/>
            <person name="Deuel B."/>
            <person name="Dowd P."/>
            <person name="Eaton D."/>
            <person name="Foster J.S."/>
            <person name="Grimaldi C."/>
            <person name="Gu Q."/>
            <person name="Hass P.E."/>
            <person name="Heldens S."/>
            <person name="Huang A."/>
            <person name="Kim H.S."/>
            <person name="Klimowski L."/>
            <person name="Jin Y."/>
            <person name="Johnson S."/>
            <person name="Lee J."/>
            <person name="Lewis L."/>
            <person name="Liao D."/>
            <person name="Mark M.R."/>
            <person name="Robbie E."/>
            <person name="Sanchez C."/>
            <person name="Schoenfeld J."/>
            <person name="Seshagiri S."/>
            <person name="Simmons L."/>
            <person name="Singh J."/>
            <person name="Smith V."/>
            <person name="Stinson J."/>
            <person name="Vagts A."/>
            <person name="Vandlen R.L."/>
            <person name="Watanabe C."/>
            <person name="Wieand D."/>
            <person name="Woods K."/>
            <person name="Xie M.-H."/>
            <person name="Yansura D.G."/>
            <person name="Yi S."/>
            <person name="Yu G."/>
            <person name="Yuan J."/>
            <person name="Zhang M."/>
            <person name="Zhang Z."/>
            <person name="Goddard A.D."/>
            <person name="Wood W.I."/>
            <person name="Godowski P.J."/>
            <person name="Gray A.M."/>
        </authorList>
    </citation>
    <scope>NUCLEOTIDE SEQUENCE [LARGE SCALE MRNA] (ISOFORM 2)</scope>
    <scope>VARIANT GLN-646</scope>
</reference>
<reference key="4">
    <citation type="journal article" date="2004" name="Nat. Genet.">
        <title>Complete sequencing and characterization of 21,243 full-length human cDNAs.</title>
        <authorList>
            <person name="Ota T."/>
            <person name="Suzuki Y."/>
            <person name="Nishikawa T."/>
            <person name="Otsuki T."/>
            <person name="Sugiyama T."/>
            <person name="Irie R."/>
            <person name="Wakamatsu A."/>
            <person name="Hayashi K."/>
            <person name="Sato H."/>
            <person name="Nagai K."/>
            <person name="Kimura K."/>
            <person name="Makita H."/>
            <person name="Sekine M."/>
            <person name="Obayashi M."/>
            <person name="Nishi T."/>
            <person name="Shibahara T."/>
            <person name="Tanaka T."/>
            <person name="Ishii S."/>
            <person name="Yamamoto J."/>
            <person name="Saito K."/>
            <person name="Kawai Y."/>
            <person name="Isono Y."/>
            <person name="Nakamura Y."/>
            <person name="Nagahari K."/>
            <person name="Murakami K."/>
            <person name="Yasuda T."/>
            <person name="Iwayanagi T."/>
            <person name="Wagatsuma M."/>
            <person name="Shiratori A."/>
            <person name="Sudo H."/>
            <person name="Hosoiri T."/>
            <person name="Kaku Y."/>
            <person name="Kodaira H."/>
            <person name="Kondo H."/>
            <person name="Sugawara M."/>
            <person name="Takahashi M."/>
            <person name="Kanda K."/>
            <person name="Yokoi T."/>
            <person name="Furuya T."/>
            <person name="Kikkawa E."/>
            <person name="Omura Y."/>
            <person name="Abe K."/>
            <person name="Kamihara K."/>
            <person name="Katsuta N."/>
            <person name="Sato K."/>
            <person name="Tanikawa M."/>
            <person name="Yamazaki M."/>
            <person name="Ninomiya K."/>
            <person name="Ishibashi T."/>
            <person name="Yamashita H."/>
            <person name="Murakawa K."/>
            <person name="Fujimori K."/>
            <person name="Tanai H."/>
            <person name="Kimata M."/>
            <person name="Watanabe M."/>
            <person name="Hiraoka S."/>
            <person name="Chiba Y."/>
            <person name="Ishida S."/>
            <person name="Ono Y."/>
            <person name="Takiguchi S."/>
            <person name="Watanabe S."/>
            <person name="Yosida M."/>
            <person name="Hotuta T."/>
            <person name="Kusano J."/>
            <person name="Kanehori K."/>
            <person name="Takahashi-Fujii A."/>
            <person name="Hara H."/>
            <person name="Tanase T.-O."/>
            <person name="Nomura Y."/>
            <person name="Togiya S."/>
            <person name="Komai F."/>
            <person name="Hara R."/>
            <person name="Takeuchi K."/>
            <person name="Arita M."/>
            <person name="Imose N."/>
            <person name="Musashino K."/>
            <person name="Yuuki H."/>
            <person name="Oshima A."/>
            <person name="Sasaki N."/>
            <person name="Aotsuka S."/>
            <person name="Yoshikawa Y."/>
            <person name="Matsunawa H."/>
            <person name="Ichihara T."/>
            <person name="Shiohata N."/>
            <person name="Sano S."/>
            <person name="Moriya S."/>
            <person name="Momiyama H."/>
            <person name="Satoh N."/>
            <person name="Takami S."/>
            <person name="Terashima Y."/>
            <person name="Suzuki O."/>
            <person name="Nakagawa S."/>
            <person name="Senoh A."/>
            <person name="Mizoguchi H."/>
            <person name="Goto Y."/>
            <person name="Shimizu F."/>
            <person name="Wakebe H."/>
            <person name="Hishigaki H."/>
            <person name="Watanabe T."/>
            <person name="Sugiyama A."/>
            <person name="Takemoto M."/>
            <person name="Kawakami B."/>
            <person name="Yamazaki M."/>
            <person name="Watanabe K."/>
            <person name="Kumagai A."/>
            <person name="Itakura S."/>
            <person name="Fukuzumi Y."/>
            <person name="Fujimori Y."/>
            <person name="Komiyama M."/>
            <person name="Tashiro H."/>
            <person name="Tanigami A."/>
            <person name="Fujiwara T."/>
            <person name="Ono T."/>
            <person name="Yamada K."/>
            <person name="Fujii Y."/>
            <person name="Ozaki K."/>
            <person name="Hirao M."/>
            <person name="Ohmori Y."/>
            <person name="Kawabata A."/>
            <person name="Hikiji T."/>
            <person name="Kobatake N."/>
            <person name="Inagaki H."/>
            <person name="Ikema Y."/>
            <person name="Okamoto S."/>
            <person name="Okitani R."/>
            <person name="Kawakami T."/>
            <person name="Noguchi S."/>
            <person name="Itoh T."/>
            <person name="Shigeta K."/>
            <person name="Senba T."/>
            <person name="Matsumura K."/>
            <person name="Nakajima Y."/>
            <person name="Mizuno T."/>
            <person name="Morinaga M."/>
            <person name="Sasaki M."/>
            <person name="Togashi T."/>
            <person name="Oyama M."/>
            <person name="Hata H."/>
            <person name="Watanabe M."/>
            <person name="Komatsu T."/>
            <person name="Mizushima-Sugano J."/>
            <person name="Satoh T."/>
            <person name="Shirai Y."/>
            <person name="Takahashi Y."/>
            <person name="Nakagawa K."/>
            <person name="Okumura K."/>
            <person name="Nagase T."/>
            <person name="Nomura N."/>
            <person name="Kikuchi H."/>
            <person name="Masuho Y."/>
            <person name="Yamashita R."/>
            <person name="Nakai K."/>
            <person name="Yada T."/>
            <person name="Nakamura Y."/>
            <person name="Ohara O."/>
            <person name="Isogai T."/>
            <person name="Sugano S."/>
        </authorList>
    </citation>
    <scope>NUCLEOTIDE SEQUENCE [LARGE SCALE MRNA] (ISOFORM 1)</scope>
</reference>
<reference key="5">
    <citation type="journal article" date="2005" name="Nature">
        <title>Generation and annotation of the DNA sequences of human chromosomes 2 and 4.</title>
        <authorList>
            <person name="Hillier L.W."/>
            <person name="Graves T.A."/>
            <person name="Fulton R.S."/>
            <person name="Fulton L.A."/>
            <person name="Pepin K.H."/>
            <person name="Minx P."/>
            <person name="Wagner-McPherson C."/>
            <person name="Layman D."/>
            <person name="Wylie K."/>
            <person name="Sekhon M."/>
            <person name="Becker M.C."/>
            <person name="Fewell G.A."/>
            <person name="Delehaunty K.D."/>
            <person name="Miner T.L."/>
            <person name="Nash W.E."/>
            <person name="Kremitzki C."/>
            <person name="Oddy L."/>
            <person name="Du H."/>
            <person name="Sun H."/>
            <person name="Bradshaw-Cordum H."/>
            <person name="Ali J."/>
            <person name="Carter J."/>
            <person name="Cordes M."/>
            <person name="Harris A."/>
            <person name="Isak A."/>
            <person name="van Brunt A."/>
            <person name="Nguyen C."/>
            <person name="Du F."/>
            <person name="Courtney L."/>
            <person name="Kalicki J."/>
            <person name="Ozersky P."/>
            <person name="Abbott S."/>
            <person name="Armstrong J."/>
            <person name="Belter E.A."/>
            <person name="Caruso L."/>
            <person name="Cedroni M."/>
            <person name="Cotton M."/>
            <person name="Davidson T."/>
            <person name="Desai A."/>
            <person name="Elliott G."/>
            <person name="Erb T."/>
            <person name="Fronick C."/>
            <person name="Gaige T."/>
            <person name="Haakenson W."/>
            <person name="Haglund K."/>
            <person name="Holmes A."/>
            <person name="Harkins R."/>
            <person name="Kim K."/>
            <person name="Kruchowski S.S."/>
            <person name="Strong C.M."/>
            <person name="Grewal N."/>
            <person name="Goyea E."/>
            <person name="Hou S."/>
            <person name="Levy A."/>
            <person name="Martinka S."/>
            <person name="Mead K."/>
            <person name="McLellan M.D."/>
            <person name="Meyer R."/>
            <person name="Randall-Maher J."/>
            <person name="Tomlinson C."/>
            <person name="Dauphin-Kohlberg S."/>
            <person name="Kozlowicz-Reilly A."/>
            <person name="Shah N."/>
            <person name="Swearengen-Shahid S."/>
            <person name="Snider J."/>
            <person name="Strong J.T."/>
            <person name="Thompson J."/>
            <person name="Yoakum M."/>
            <person name="Leonard S."/>
            <person name="Pearman C."/>
            <person name="Trani L."/>
            <person name="Radionenko M."/>
            <person name="Waligorski J.E."/>
            <person name="Wang C."/>
            <person name="Rock S.M."/>
            <person name="Tin-Wollam A.-M."/>
            <person name="Maupin R."/>
            <person name="Latreille P."/>
            <person name="Wendl M.C."/>
            <person name="Yang S.-P."/>
            <person name="Pohl C."/>
            <person name="Wallis J.W."/>
            <person name="Spieth J."/>
            <person name="Bieri T.A."/>
            <person name="Berkowicz N."/>
            <person name="Nelson J.O."/>
            <person name="Osborne J."/>
            <person name="Ding L."/>
            <person name="Meyer R."/>
            <person name="Sabo A."/>
            <person name="Shotland Y."/>
            <person name="Sinha P."/>
            <person name="Wohldmann P.E."/>
            <person name="Cook L.L."/>
            <person name="Hickenbotham M.T."/>
            <person name="Eldred J."/>
            <person name="Williams D."/>
            <person name="Jones T.A."/>
            <person name="She X."/>
            <person name="Ciccarelli F.D."/>
            <person name="Izaurralde E."/>
            <person name="Taylor J."/>
            <person name="Schmutz J."/>
            <person name="Myers R.M."/>
            <person name="Cox D.R."/>
            <person name="Huang X."/>
            <person name="McPherson J.D."/>
            <person name="Mardis E.R."/>
            <person name="Clifton S.W."/>
            <person name="Warren W.C."/>
            <person name="Chinwalla A.T."/>
            <person name="Eddy S.R."/>
            <person name="Marra M.A."/>
            <person name="Ovcharenko I."/>
            <person name="Furey T.S."/>
            <person name="Miller W."/>
            <person name="Eichler E.E."/>
            <person name="Bork P."/>
            <person name="Suyama M."/>
            <person name="Torrents D."/>
            <person name="Waterston R.H."/>
            <person name="Wilson R.K."/>
        </authorList>
    </citation>
    <scope>NUCLEOTIDE SEQUENCE [LARGE SCALE GENOMIC DNA]</scope>
</reference>
<reference key="6">
    <citation type="submission" date="2005-09" db="EMBL/GenBank/DDBJ databases">
        <authorList>
            <person name="Mural R.J."/>
            <person name="Istrail S."/>
            <person name="Sutton G."/>
            <person name="Florea L."/>
            <person name="Halpern A.L."/>
            <person name="Mobarry C.M."/>
            <person name="Lippert R."/>
            <person name="Walenz B."/>
            <person name="Shatkay H."/>
            <person name="Dew I."/>
            <person name="Miller J.R."/>
            <person name="Flanigan M.J."/>
            <person name="Edwards N.J."/>
            <person name="Bolanos R."/>
            <person name="Fasulo D."/>
            <person name="Halldorsson B.V."/>
            <person name="Hannenhalli S."/>
            <person name="Turner R."/>
            <person name="Yooseph S."/>
            <person name="Lu F."/>
            <person name="Nusskern D.R."/>
            <person name="Shue B.C."/>
            <person name="Zheng X.H."/>
            <person name="Zhong F."/>
            <person name="Delcher A.L."/>
            <person name="Huson D.H."/>
            <person name="Kravitz S.A."/>
            <person name="Mouchard L."/>
            <person name="Reinert K."/>
            <person name="Remington K.A."/>
            <person name="Clark A.G."/>
            <person name="Waterman M.S."/>
            <person name="Eichler E.E."/>
            <person name="Adams M.D."/>
            <person name="Hunkapiller M.W."/>
            <person name="Myers E.W."/>
            <person name="Venter J.C."/>
        </authorList>
    </citation>
    <scope>NUCLEOTIDE SEQUENCE [LARGE SCALE GENOMIC DNA]</scope>
</reference>
<reference key="7">
    <citation type="journal article" date="2004" name="Genome Res.">
        <title>The status, quality, and expansion of the NIH full-length cDNA project: the Mammalian Gene Collection (MGC).</title>
        <authorList>
            <consortium name="The MGC Project Team"/>
        </authorList>
    </citation>
    <scope>NUCLEOTIDE SEQUENCE [LARGE SCALE MRNA] (ISOFORMS 1 AND 3)</scope>
    <scope>VARIANT GLN-646</scope>
    <source>
        <tissue>Colon</tissue>
        <tissue>Placenta</tissue>
    </source>
</reference>
<reference key="8">
    <citation type="journal article" date="2007" name="BMC Genomics">
        <title>The full-ORF clone resource of the German cDNA consortium.</title>
        <authorList>
            <person name="Bechtel S."/>
            <person name="Rosenfelder H."/>
            <person name="Duda A."/>
            <person name="Schmidt C.P."/>
            <person name="Ernst U."/>
            <person name="Wellenreuther R."/>
            <person name="Mehrle A."/>
            <person name="Schuster C."/>
            <person name="Bahr A."/>
            <person name="Bloecker H."/>
            <person name="Heubner D."/>
            <person name="Hoerlein A."/>
            <person name="Michel G."/>
            <person name="Wedler H."/>
            <person name="Koehrer K."/>
            <person name="Ottenwaelder B."/>
            <person name="Poustka A."/>
            <person name="Wiemann S."/>
            <person name="Schupp I."/>
        </authorList>
    </citation>
    <scope>NUCLEOTIDE SEQUENCE [LARGE SCALE MRNA] OF 2-793 (ISOFORM 1)</scope>
    <scope>VARIANTS ASN-76 AND GLN-646</scope>
    <source>
        <tissue>Spinal cord</tissue>
        <tissue>Testis</tissue>
    </source>
</reference>
<reference key="9">
    <citation type="journal article" date="2005" name="DNA Res.">
        <title>Signal sequence and keyword trap in silico for selection of full-length human cDNAs encoding secretion or membrane proteins from oligo-capped cDNA libraries.</title>
        <authorList>
            <person name="Otsuki T."/>
            <person name="Ota T."/>
            <person name="Nishikawa T."/>
            <person name="Hayashi K."/>
            <person name="Suzuki Y."/>
            <person name="Yamamoto J."/>
            <person name="Wakamatsu A."/>
            <person name="Kimura K."/>
            <person name="Sakamoto K."/>
            <person name="Hatano N."/>
            <person name="Kawai Y."/>
            <person name="Ishii S."/>
            <person name="Saito K."/>
            <person name="Kojima S."/>
            <person name="Sugiyama T."/>
            <person name="Ono T."/>
            <person name="Okano K."/>
            <person name="Yoshikawa Y."/>
            <person name="Aotsuka S."/>
            <person name="Sasaki N."/>
            <person name="Hattori A."/>
            <person name="Okumura K."/>
            <person name="Nagai K."/>
            <person name="Sugano S."/>
            <person name="Isogai T."/>
        </authorList>
    </citation>
    <scope>NUCLEOTIDE SEQUENCE [LARGE SCALE MRNA] OF 414-793</scope>
    <source>
        <tissue>Teratocarcinoma</tissue>
    </source>
</reference>
<reference key="10">
    <citation type="journal article" date="2008" name="Mol. Biol. Cell">
        <title>ERdj4 and ERdj5 are required for endoplasmic reticulum-associated protein degradation of misfolded surfactant protein C.</title>
        <authorList>
            <person name="Dong M."/>
            <person name="Bridges J.P."/>
            <person name="Apsley K."/>
            <person name="Xu Y."/>
            <person name="Weaver T.E."/>
        </authorList>
    </citation>
    <scope>FUNCTION</scope>
</reference>
<reference key="11">
    <citation type="journal article" date="2009" name="J. Biol. Chem.">
        <title>ERdj5 sensitizes neuroblastoma cells to endoplasmic reticulum stress-induced apoptosis.</title>
        <authorList>
            <person name="Thomas C.G."/>
            <person name="Spyrou G."/>
        </authorList>
    </citation>
    <scope>FUNCTION</scope>
</reference>
<reference key="12">
    <citation type="journal article" date="2011" name="BMC Syst. Biol.">
        <title>Initial characterization of the human central proteome.</title>
        <authorList>
            <person name="Burkard T.R."/>
            <person name="Planyavsky M."/>
            <person name="Kaupe I."/>
            <person name="Breitwieser F.P."/>
            <person name="Buerckstuemmer T."/>
            <person name="Bennett K.L."/>
            <person name="Superti-Furga G."/>
            <person name="Colinge J."/>
        </authorList>
    </citation>
    <scope>IDENTIFICATION BY MASS SPECTROMETRY [LARGE SCALE ANALYSIS]</scope>
</reference>
<reference key="13">
    <citation type="journal article" date="2013" name="Mol. Cell">
        <title>ERdj5 is the ER reductase that catalyzes the removal of non-native disulfides and correct folding of the LDL receptor.</title>
        <authorList>
            <person name="Oka O.B."/>
            <person name="Pringle M.A."/>
            <person name="Schopp I.M."/>
            <person name="Braakman I."/>
            <person name="Bulleid N.J."/>
        </authorList>
    </citation>
    <scope>FUNCTION</scope>
    <scope>SUBCELLULAR LOCATION</scope>
    <scope>INTERACTION WITH HSPA5</scope>
    <scope>MUTAGENESIS OF HIS-63; CYS-161; CYS-483; CYS-591 AND CYS-703</scope>
</reference>
<reference key="14">
    <citation type="journal article" date="2015" name="Proteomics">
        <title>N-terminome analysis of the human mitochondrial proteome.</title>
        <authorList>
            <person name="Vaca Jacome A.S."/>
            <person name="Rabilloud T."/>
            <person name="Schaeffer-Reiss C."/>
            <person name="Rompais M."/>
            <person name="Ayoub D."/>
            <person name="Lane L."/>
            <person name="Bairoch A."/>
            <person name="Van Dorsselaer A."/>
            <person name="Carapito C."/>
        </authorList>
    </citation>
    <scope>IDENTIFICATION BY MASS SPECTROMETRY [LARGE SCALE ANALYSIS]</scope>
</reference>
<accession>Q8IXB1</accession>
<accession>Q17RJ6</accession>
<accession>Q3B7W8</accession>
<accession>Q4ZG06</accession>
<accession>Q53QT7</accession>
<accession>Q6UWZ6</accession>
<accession>Q86T61</accession>
<accession>Q8NC82</accession>
<accession>Q8TD87</accession>
<accession>Q96K38</accession>
<accession>Q96K44</accession>
<accession>Q96K54</accession>
<accession>Q9NSY6</accession>
<organism>
    <name type="scientific">Homo sapiens</name>
    <name type="common">Human</name>
    <dbReference type="NCBI Taxonomy" id="9606"/>
    <lineage>
        <taxon>Eukaryota</taxon>
        <taxon>Metazoa</taxon>
        <taxon>Chordata</taxon>
        <taxon>Craniata</taxon>
        <taxon>Vertebrata</taxon>
        <taxon>Euteleostomi</taxon>
        <taxon>Mammalia</taxon>
        <taxon>Eutheria</taxon>
        <taxon>Euarchontoglires</taxon>
        <taxon>Primates</taxon>
        <taxon>Haplorrhini</taxon>
        <taxon>Catarrhini</taxon>
        <taxon>Hominidae</taxon>
        <taxon>Homo</taxon>
    </lineage>
</organism>
<dbReference type="EC" id="1.8.4.-"/>
<dbReference type="EMBL" id="AF038503">
    <property type="protein sequence ID" value="AAN73271.1"/>
    <property type="molecule type" value="mRNA"/>
</dbReference>
<dbReference type="EMBL" id="AF490904">
    <property type="protein sequence ID" value="AAM09527.1"/>
    <property type="molecule type" value="mRNA"/>
</dbReference>
<dbReference type="EMBL" id="AY358577">
    <property type="protein sequence ID" value="AAQ88940.1"/>
    <property type="molecule type" value="mRNA"/>
</dbReference>
<dbReference type="EMBL" id="AK027450">
    <property type="protein sequence ID" value="BAB55121.1"/>
    <property type="status" value="ALT_INIT"/>
    <property type="molecule type" value="mRNA"/>
</dbReference>
<dbReference type="EMBL" id="AK027647">
    <property type="protein sequence ID" value="BAB55263.1"/>
    <property type="molecule type" value="mRNA"/>
</dbReference>
<dbReference type="EMBL" id="AK027696">
    <property type="protein sequence ID" value="BAB55304.1"/>
    <property type="molecule type" value="mRNA"/>
</dbReference>
<dbReference type="EMBL" id="AC073951">
    <property type="protein sequence ID" value="AAX88931.1"/>
    <property type="molecule type" value="Genomic_DNA"/>
</dbReference>
<dbReference type="EMBL" id="AC105396">
    <property type="protein sequence ID" value="AAY24240.1"/>
    <property type="molecule type" value="Genomic_DNA"/>
</dbReference>
<dbReference type="EMBL" id="CH471058">
    <property type="protein sequence ID" value="EAX10960.1"/>
    <property type="molecule type" value="Genomic_DNA"/>
</dbReference>
<dbReference type="EMBL" id="CH471058">
    <property type="protein sequence ID" value="EAX10963.1"/>
    <property type="molecule type" value="Genomic_DNA"/>
</dbReference>
<dbReference type="EMBL" id="BC107425">
    <property type="protein sequence ID" value="AAI07426.1"/>
    <property type="molecule type" value="mRNA"/>
</dbReference>
<dbReference type="EMBL" id="BC117299">
    <property type="protein sequence ID" value="AAI17300.1"/>
    <property type="molecule type" value="mRNA"/>
</dbReference>
<dbReference type="EMBL" id="BC126168">
    <property type="protein sequence ID" value="AAI26169.1"/>
    <property type="molecule type" value="mRNA"/>
</dbReference>
<dbReference type="EMBL" id="AL137648">
    <property type="protein sequence ID" value="CAB70858.1"/>
    <property type="molecule type" value="mRNA"/>
</dbReference>
<dbReference type="EMBL" id="AL832646">
    <property type="protein sequence ID" value="CAD89982.1"/>
    <property type="molecule type" value="mRNA"/>
</dbReference>
<dbReference type="EMBL" id="AK074905">
    <property type="protein sequence ID" value="BAC11281.1"/>
    <property type="status" value="ALT_INIT"/>
    <property type="molecule type" value="mRNA"/>
</dbReference>
<dbReference type="CCDS" id="CCDS33345.1">
    <molecule id="Q8IXB1-1"/>
</dbReference>
<dbReference type="CCDS" id="CCDS74613.1">
    <molecule id="Q8IXB1-2"/>
</dbReference>
<dbReference type="PIR" id="T46333">
    <property type="entry name" value="T46333"/>
</dbReference>
<dbReference type="RefSeq" id="NP_001258510.1">
    <molecule id="Q8IXB1-2"/>
    <property type="nucleotide sequence ID" value="NM_001271581.3"/>
</dbReference>
<dbReference type="RefSeq" id="NP_061854.1">
    <molecule id="Q8IXB1-1"/>
    <property type="nucleotide sequence ID" value="NM_018981.4"/>
</dbReference>
<dbReference type="SMR" id="Q8IXB1"/>
<dbReference type="BioGRID" id="119947">
    <property type="interactions" value="263"/>
</dbReference>
<dbReference type="CORUM" id="Q8IXB1"/>
<dbReference type="DIP" id="DIP-48947N"/>
<dbReference type="FunCoup" id="Q8IXB1">
    <property type="interactions" value="2640"/>
</dbReference>
<dbReference type="IntAct" id="Q8IXB1">
    <property type="interactions" value="98"/>
</dbReference>
<dbReference type="MINT" id="Q8IXB1"/>
<dbReference type="STRING" id="9606.ENSP00000264065"/>
<dbReference type="GlyCosmos" id="Q8IXB1">
    <property type="glycosylation" value="1 site, No reported glycans"/>
</dbReference>
<dbReference type="GlyGen" id="Q8IXB1">
    <property type="glycosylation" value="2 sites, 1 O-linked glycan (1 site)"/>
</dbReference>
<dbReference type="iPTMnet" id="Q8IXB1"/>
<dbReference type="PhosphoSitePlus" id="Q8IXB1"/>
<dbReference type="SwissPalm" id="Q8IXB1"/>
<dbReference type="BioMuta" id="DNAJC10"/>
<dbReference type="DMDM" id="142981524"/>
<dbReference type="jPOST" id="Q8IXB1"/>
<dbReference type="MassIVE" id="Q8IXB1"/>
<dbReference type="PaxDb" id="9606-ENSP00000264065"/>
<dbReference type="PeptideAtlas" id="Q8IXB1"/>
<dbReference type="ProteomicsDB" id="61664"/>
<dbReference type="ProteomicsDB" id="70980">
    <molecule id="Q8IXB1-1"/>
</dbReference>
<dbReference type="ProteomicsDB" id="70981">
    <molecule id="Q8IXB1-2"/>
</dbReference>
<dbReference type="Pumba" id="Q8IXB1"/>
<dbReference type="Antibodypedia" id="33990">
    <property type="antibodies" value="227 antibodies from 29 providers"/>
</dbReference>
<dbReference type="DNASU" id="54431"/>
<dbReference type="Ensembl" id="ENST00000264065.12">
    <molecule id="Q8IXB1-1"/>
    <property type="protein sequence ID" value="ENSP00000264065.6"/>
    <property type="gene ID" value="ENSG00000077232.19"/>
</dbReference>
<dbReference type="Ensembl" id="ENST00000537515.5">
    <molecule id="Q8IXB1-3"/>
    <property type="protein sequence ID" value="ENSP00000441560.1"/>
    <property type="gene ID" value="ENSG00000077232.19"/>
</dbReference>
<dbReference type="Ensembl" id="ENST00000616986.5">
    <molecule id="Q8IXB1-2"/>
    <property type="protein sequence ID" value="ENSP00000479930.1"/>
    <property type="gene ID" value="ENSG00000077232.19"/>
</dbReference>
<dbReference type="Ensembl" id="ENST00000680480.1">
    <molecule id="Q8IXB1-3"/>
    <property type="protein sequence ID" value="ENSP00000505358.1"/>
    <property type="gene ID" value="ENSG00000077232.19"/>
</dbReference>
<dbReference type="GeneID" id="54431"/>
<dbReference type="KEGG" id="hsa:54431"/>
<dbReference type="MANE-Select" id="ENST00000264065.12">
    <property type="protein sequence ID" value="ENSP00000264065.6"/>
    <property type="RefSeq nucleotide sequence ID" value="NM_018981.4"/>
    <property type="RefSeq protein sequence ID" value="NP_061854.1"/>
</dbReference>
<dbReference type="UCSC" id="uc002uow.3">
    <molecule id="Q8IXB1-1"/>
    <property type="organism name" value="human"/>
</dbReference>
<dbReference type="AGR" id="HGNC:24637"/>
<dbReference type="CTD" id="54431"/>
<dbReference type="DisGeNET" id="54431"/>
<dbReference type="GeneCards" id="DNAJC10"/>
<dbReference type="HGNC" id="HGNC:24637">
    <property type="gene designation" value="DNAJC10"/>
</dbReference>
<dbReference type="HPA" id="ENSG00000077232">
    <property type="expression patterns" value="Tissue enhanced (epididymis)"/>
</dbReference>
<dbReference type="MIM" id="607987">
    <property type="type" value="gene"/>
</dbReference>
<dbReference type="neXtProt" id="NX_Q8IXB1"/>
<dbReference type="OpenTargets" id="ENSG00000077232"/>
<dbReference type="PharmGKB" id="PA134917195"/>
<dbReference type="VEuPathDB" id="HostDB:ENSG00000077232"/>
<dbReference type="eggNOG" id="KOG0191">
    <property type="taxonomic scope" value="Eukaryota"/>
</dbReference>
<dbReference type="eggNOG" id="KOG0713">
    <property type="taxonomic scope" value="Eukaryota"/>
</dbReference>
<dbReference type="GeneTree" id="ENSGT00940000155558"/>
<dbReference type="HOGENOM" id="CLU_023279_0_0_1"/>
<dbReference type="InParanoid" id="Q8IXB1"/>
<dbReference type="OMA" id="APTWRKF"/>
<dbReference type="OrthoDB" id="5810603at2759"/>
<dbReference type="PAN-GO" id="Q8IXB1">
    <property type="GO annotations" value="5 GO annotations based on evolutionary models"/>
</dbReference>
<dbReference type="PhylomeDB" id="Q8IXB1"/>
<dbReference type="TreeFam" id="TF105169"/>
<dbReference type="PathwayCommons" id="Q8IXB1"/>
<dbReference type="SignaLink" id="Q8IXB1"/>
<dbReference type="BioGRID-ORCS" id="54431">
    <property type="hits" value="12 hits in 1156 CRISPR screens"/>
</dbReference>
<dbReference type="ChiTaRS" id="DNAJC10">
    <property type="organism name" value="human"/>
</dbReference>
<dbReference type="GeneWiki" id="DNAJC10"/>
<dbReference type="GenomeRNAi" id="54431"/>
<dbReference type="Pharos" id="Q8IXB1">
    <property type="development level" value="Tbio"/>
</dbReference>
<dbReference type="PRO" id="PR:Q8IXB1"/>
<dbReference type="Proteomes" id="UP000005640">
    <property type="component" value="Chromosome 2"/>
</dbReference>
<dbReference type="RNAct" id="Q8IXB1">
    <property type="molecule type" value="protein"/>
</dbReference>
<dbReference type="Bgee" id="ENSG00000077232">
    <property type="expression patterns" value="Expressed in corpus epididymis and 198 other cell types or tissues"/>
</dbReference>
<dbReference type="ExpressionAtlas" id="Q8IXB1">
    <property type="expression patterns" value="baseline and differential"/>
</dbReference>
<dbReference type="GO" id="GO:0005783">
    <property type="term" value="C:endoplasmic reticulum"/>
    <property type="evidence" value="ECO:0000314"/>
    <property type="project" value="UniProtKB"/>
</dbReference>
<dbReference type="GO" id="GO:0034663">
    <property type="term" value="C:endoplasmic reticulum chaperone complex"/>
    <property type="evidence" value="ECO:0000314"/>
    <property type="project" value="UniProtKB"/>
</dbReference>
<dbReference type="GO" id="GO:0005788">
    <property type="term" value="C:endoplasmic reticulum lumen"/>
    <property type="evidence" value="ECO:0000314"/>
    <property type="project" value="UniProtKB"/>
</dbReference>
<dbReference type="GO" id="GO:0016020">
    <property type="term" value="C:membrane"/>
    <property type="evidence" value="ECO:0007005"/>
    <property type="project" value="UniProtKB"/>
</dbReference>
<dbReference type="GO" id="GO:0001671">
    <property type="term" value="F:ATPase activator activity"/>
    <property type="evidence" value="ECO:0000250"/>
    <property type="project" value="UniProtKB"/>
</dbReference>
<dbReference type="GO" id="GO:0051117">
    <property type="term" value="F:ATPase binding"/>
    <property type="evidence" value="ECO:0000353"/>
    <property type="project" value="UniProtKB"/>
</dbReference>
<dbReference type="GO" id="GO:0015036">
    <property type="term" value="F:disulfide oxidoreductase activity"/>
    <property type="evidence" value="ECO:0000250"/>
    <property type="project" value="UniProtKB"/>
</dbReference>
<dbReference type="GO" id="GO:0030544">
    <property type="term" value="F:Hsp70 protein binding"/>
    <property type="evidence" value="ECO:0000353"/>
    <property type="project" value="UniProtKB"/>
</dbReference>
<dbReference type="GO" id="GO:0051787">
    <property type="term" value="F:misfolded protein binding"/>
    <property type="evidence" value="ECO:0000314"/>
    <property type="project" value="UniProtKB"/>
</dbReference>
<dbReference type="GO" id="GO:0016671">
    <property type="term" value="F:oxidoreductase activity, acting on a sulfur group of donors, disulfide as acceptor"/>
    <property type="evidence" value="ECO:0000250"/>
    <property type="project" value="UniProtKB"/>
</dbReference>
<dbReference type="GO" id="GO:0015035">
    <property type="term" value="F:protein-disulfide reductase activity"/>
    <property type="evidence" value="ECO:0000314"/>
    <property type="project" value="UniProtKB"/>
</dbReference>
<dbReference type="GO" id="GO:0051087">
    <property type="term" value="F:protein-folding chaperone binding"/>
    <property type="evidence" value="ECO:0000314"/>
    <property type="project" value="UniProtKB"/>
</dbReference>
<dbReference type="GO" id="GO:0036503">
    <property type="term" value="P:ERAD pathway"/>
    <property type="evidence" value="ECO:0000315"/>
    <property type="project" value="UniProtKB"/>
</dbReference>
<dbReference type="GO" id="GO:0070059">
    <property type="term" value="P:intrinsic apoptotic signaling pathway in response to endoplasmic reticulum stress"/>
    <property type="evidence" value="ECO:0000314"/>
    <property type="project" value="UniProtKB"/>
</dbReference>
<dbReference type="GO" id="GO:0036498">
    <property type="term" value="P:IRE1-mediated unfolded protein response"/>
    <property type="evidence" value="ECO:0000318"/>
    <property type="project" value="GO_Central"/>
</dbReference>
<dbReference type="GO" id="GO:0034975">
    <property type="term" value="P:protein folding in endoplasmic reticulum"/>
    <property type="evidence" value="ECO:0000314"/>
    <property type="project" value="UniProtKB"/>
</dbReference>
<dbReference type="GO" id="GO:0034976">
    <property type="term" value="P:response to endoplasmic reticulum stress"/>
    <property type="evidence" value="ECO:0000314"/>
    <property type="project" value="UniProtKB"/>
</dbReference>
<dbReference type="CDD" id="cd06257">
    <property type="entry name" value="DnaJ"/>
    <property type="match status" value="1"/>
</dbReference>
<dbReference type="CDD" id="cd03004">
    <property type="entry name" value="PDI_a_ERdj5_C"/>
    <property type="match status" value="3"/>
</dbReference>
<dbReference type="CDD" id="cd03003">
    <property type="entry name" value="PDI_a_ERdj5_N"/>
    <property type="match status" value="1"/>
</dbReference>
<dbReference type="FunFam" id="1.10.287.110:FF:000029">
    <property type="entry name" value="DnaJ homolog subfamily C member 10"/>
    <property type="match status" value="1"/>
</dbReference>
<dbReference type="FunFam" id="3.40.30.10:FF:000087">
    <property type="entry name" value="DnaJ homolog subfamily C member 10"/>
    <property type="match status" value="1"/>
</dbReference>
<dbReference type="FunFam" id="3.40.30.10:FF:000106">
    <property type="entry name" value="DnaJ homolog subfamily C member 10"/>
    <property type="match status" value="1"/>
</dbReference>
<dbReference type="FunFam" id="3.40.30.10:FF:000125">
    <property type="entry name" value="DnaJ homolog subfamily C member 10"/>
    <property type="match status" value="1"/>
</dbReference>
<dbReference type="FunFam" id="3.40.30.10:FF:000135">
    <property type="entry name" value="DnaJ homolog subfamily C member 10"/>
    <property type="match status" value="1"/>
</dbReference>
<dbReference type="FunFam" id="3.40.30.10:FF:000137">
    <property type="entry name" value="DnaJ homolog subfamily C member 10"/>
    <property type="match status" value="1"/>
</dbReference>
<dbReference type="FunFam" id="3.40.30.10:FF:000169">
    <property type="entry name" value="DnaJ homolog subfamily C member 10"/>
    <property type="match status" value="1"/>
</dbReference>
<dbReference type="Gene3D" id="1.10.287.110">
    <property type="entry name" value="DnaJ domain"/>
    <property type="match status" value="1"/>
</dbReference>
<dbReference type="Gene3D" id="3.40.30.10">
    <property type="entry name" value="Glutaredoxin"/>
    <property type="match status" value="6"/>
</dbReference>
<dbReference type="InterPro" id="IPR001623">
    <property type="entry name" value="DnaJ_domain"/>
</dbReference>
<dbReference type="InterPro" id="IPR052460">
    <property type="entry name" value="ER_disulfide_reductase"/>
</dbReference>
<dbReference type="InterPro" id="IPR021170">
    <property type="entry name" value="ERdj5"/>
</dbReference>
<dbReference type="InterPro" id="IPR035674">
    <property type="entry name" value="ERdj5_TRX_C"/>
</dbReference>
<dbReference type="InterPro" id="IPR035673">
    <property type="entry name" value="ERdj5_TRX_N"/>
</dbReference>
<dbReference type="InterPro" id="IPR036869">
    <property type="entry name" value="J_dom_sf"/>
</dbReference>
<dbReference type="InterPro" id="IPR036249">
    <property type="entry name" value="Thioredoxin-like_sf"/>
</dbReference>
<dbReference type="InterPro" id="IPR017937">
    <property type="entry name" value="Thioredoxin_CS"/>
</dbReference>
<dbReference type="InterPro" id="IPR013766">
    <property type="entry name" value="Thioredoxin_domain"/>
</dbReference>
<dbReference type="PANTHER" id="PTHR44340">
    <property type="entry name" value="DNAJ HOMOLOG SUBFAMILY C MEMBER 10"/>
    <property type="match status" value="1"/>
</dbReference>
<dbReference type="PANTHER" id="PTHR44340:SF1">
    <property type="entry name" value="DNAJ HOMOLOG SUBFAMILY C MEMBER 10"/>
    <property type="match status" value="1"/>
</dbReference>
<dbReference type="Pfam" id="PF00226">
    <property type="entry name" value="DnaJ"/>
    <property type="match status" value="1"/>
</dbReference>
<dbReference type="Pfam" id="PF00085">
    <property type="entry name" value="Thioredoxin"/>
    <property type="match status" value="4"/>
</dbReference>
<dbReference type="PIRSF" id="PIRSF037293">
    <property type="entry name" value="DnaJ_homolog_subfam-C"/>
    <property type="match status" value="1"/>
</dbReference>
<dbReference type="PRINTS" id="PR00625">
    <property type="entry name" value="JDOMAIN"/>
</dbReference>
<dbReference type="PRINTS" id="PR00421">
    <property type="entry name" value="THIOREDOXIN"/>
</dbReference>
<dbReference type="SMART" id="SM00271">
    <property type="entry name" value="DnaJ"/>
    <property type="match status" value="1"/>
</dbReference>
<dbReference type="SUPFAM" id="SSF46565">
    <property type="entry name" value="Chaperone J-domain"/>
    <property type="match status" value="1"/>
</dbReference>
<dbReference type="SUPFAM" id="SSF52833">
    <property type="entry name" value="Thioredoxin-like"/>
    <property type="match status" value="6"/>
</dbReference>
<dbReference type="PROSITE" id="PS50076">
    <property type="entry name" value="DNAJ_2"/>
    <property type="match status" value="1"/>
</dbReference>
<dbReference type="PROSITE" id="PS00014">
    <property type="entry name" value="ER_TARGET"/>
    <property type="match status" value="1"/>
</dbReference>
<dbReference type="PROSITE" id="PS00194">
    <property type="entry name" value="THIOREDOXIN_1"/>
    <property type="match status" value="2"/>
</dbReference>
<dbReference type="PROSITE" id="PS51352">
    <property type="entry name" value="THIOREDOXIN_2"/>
    <property type="match status" value="3"/>
</dbReference>
<evidence type="ECO:0000250" key="1"/>
<evidence type="ECO:0000255" key="2"/>
<evidence type="ECO:0000255" key="3">
    <source>
        <dbReference type="PROSITE-ProRule" id="PRU00286"/>
    </source>
</evidence>
<evidence type="ECO:0000255" key="4">
    <source>
        <dbReference type="PROSITE-ProRule" id="PRU00691"/>
    </source>
</evidence>
<evidence type="ECO:0000255" key="5">
    <source>
        <dbReference type="PROSITE-ProRule" id="PRU10138"/>
    </source>
</evidence>
<evidence type="ECO:0000269" key="6">
    <source>
    </source>
</evidence>
<evidence type="ECO:0000269" key="7">
    <source>
    </source>
</evidence>
<evidence type="ECO:0000269" key="8">
    <source>
    </source>
</evidence>
<evidence type="ECO:0000269" key="9">
    <source>
    </source>
</evidence>
<evidence type="ECO:0000269" key="10">
    <source>
    </source>
</evidence>
<evidence type="ECO:0000269" key="11">
    <source>
    </source>
</evidence>
<evidence type="ECO:0000269" key="12">
    <source>
    </source>
</evidence>
<evidence type="ECO:0000269" key="13">
    <source>
    </source>
</evidence>
<evidence type="ECO:0000303" key="14">
    <source>
    </source>
</evidence>
<evidence type="ECO:0000303" key="15">
    <source>
    </source>
</evidence>
<evidence type="ECO:0000303" key="16">
    <source>
    </source>
</evidence>
<evidence type="ECO:0000305" key="17"/>
<keyword id="KW-0025">Alternative splicing</keyword>
<keyword id="KW-1015">Disulfide bond</keyword>
<keyword id="KW-0256">Endoplasmic reticulum</keyword>
<keyword id="KW-0325">Glycoprotein</keyword>
<keyword id="KW-0560">Oxidoreductase</keyword>
<keyword id="KW-1267">Proteomics identification</keyword>
<keyword id="KW-0676">Redox-active center</keyword>
<keyword id="KW-1185">Reference proteome</keyword>
<keyword id="KW-0677">Repeat</keyword>
<keyword id="KW-0732">Signal</keyword>
<protein>
    <recommendedName>
        <fullName>DnaJ homolog subfamily C member 10</fullName>
        <ecNumber>1.8.4.-</ecNumber>
    </recommendedName>
    <alternativeName>
        <fullName>Endoplasmic reticulum DNA J domain-containing protein 5</fullName>
        <shortName>ER-resident protein ERdj5</shortName>
        <shortName>ERdj5</shortName>
    </alternativeName>
    <alternativeName>
        <fullName>Macrothioredoxin</fullName>
        <shortName>MTHr</shortName>
    </alternativeName>
</protein>
<name>DJC10_HUMAN</name>
<sequence>MGVWLNKDDYIRDLKRIILCFLIVYMAILVGTDQDFYSLLGVSKTASSREIRQAFKKLALKLHPDKNPNNPNAHGDFLKINRAYEVLKDEDLRKKYDKYGEKGLEDNQGGQYESWNYYRYDFGIYDDDPEIITLERREFDAAVNSGELWFVNFYSPGCSHCHDLAPTWRDFAKEVDGLLRIGAVNCGDDRMLCRMKGVNSYPSLFIFRSGMAPVKYHGDRSKESLVSFAMQHVRSTVTELWTGNFVNSIQTAFAAGIGWLITFCSKGGDCLTSQTRLRLSGMLDGLVNVGWMDCATQDNLCKSLDITTSTTAYFPPGATLNNKEKNSILFLNSLDAKEIYLEVIHNLPDFELLSANTLEDRLAHHRWLLFFHFGKNENSNDPELKKLKTLLKNDHIQVGRFDCSSAPDICSNLYVFQPSLAVFKGQGTKEYEIHHGKKILYDILAFAKESVNSHVTTLGPQNFPANDKEPWLVDFFAPWCPPCRALLPELRRASNLLYGQLKFGTLDCTVHEGLCNMYNIQAYPTTVVFNQSNIHEYEGHHSAEQILEFIEDLMNPSVVSLTPTTFNELVTQRKHNEVWMVDFYSPWCHPCQVLMPEWKRMARTLTGLINVGSIDCQQYHSFCAQENVQRYPEIRFFPPKSNKAYHYHSYNGWNRDAYSLRIWGLGFLPQVSTDLTPQTFSEKVLQGKNHWVIDFYAPWCGPCQNFAPEFELLARMIKGKVKAGKVDCQAYAQTCQKAGIRAYPTVKFYFYERAKRNFQEEQINTRDAKAIAALISEKLETLRNQGKRNKDEL</sequence>
<feature type="signal peptide" evidence="2">
    <location>
        <begin position="1"/>
        <end position="32"/>
    </location>
</feature>
<feature type="chain" id="PRO_0000281483" description="DnaJ homolog subfamily C member 10">
    <location>
        <begin position="33"/>
        <end position="793"/>
    </location>
</feature>
<feature type="domain" description="J" evidence="3">
    <location>
        <begin position="35"/>
        <end position="100"/>
    </location>
</feature>
<feature type="domain" description="Thioredoxin 1" evidence="4">
    <location>
        <begin position="130"/>
        <end position="232"/>
    </location>
</feature>
<feature type="domain" description="Thioredoxin 2" evidence="4">
    <location>
        <begin position="454"/>
        <end position="553"/>
    </location>
</feature>
<feature type="domain" description="Thioredoxin 3" evidence="4">
    <location>
        <begin position="557"/>
        <end position="662"/>
    </location>
</feature>
<feature type="domain" description="Thioredoxin 4" evidence="4">
    <location>
        <begin position="671"/>
        <end position="778"/>
    </location>
</feature>
<feature type="region of interest" description="Trxb 1">
    <location>
        <begin position="235"/>
        <end position="350"/>
    </location>
</feature>
<feature type="region of interest" description="Trxb 2">
    <location>
        <begin position="348"/>
        <end position="463"/>
    </location>
</feature>
<feature type="short sequence motif" description="Prevents secretion from ER" evidence="5">
    <location>
        <begin position="790"/>
        <end position="793"/>
    </location>
</feature>
<feature type="glycosylation site" description="N-linked (GlcNAc...) asparagine" evidence="2">
    <location>
        <position position="530"/>
    </location>
</feature>
<feature type="disulfide bond" description="Redox-active">
    <location>
        <begin position="158"/>
        <end position="161"/>
    </location>
</feature>
<feature type="disulfide bond" description="Redox-active">
    <location>
        <begin position="480"/>
        <end position="483"/>
    </location>
</feature>
<feature type="disulfide bond" description="Redox-active">
    <location>
        <begin position="588"/>
        <end position="591"/>
    </location>
</feature>
<feature type="disulfide bond" description="Redox-active">
    <location>
        <begin position="700"/>
        <end position="703"/>
    </location>
</feature>
<feature type="splice variant" id="VSP_024011" description="In isoform 2." evidence="14 15">
    <location>
        <begin position="284"/>
        <end position="329"/>
    </location>
</feature>
<feature type="splice variant" id="VSP_054434" description="In isoform 3." evidence="16">
    <original>FLN</original>
    <variation>LLH</variation>
    <location>
        <begin position="330"/>
        <end position="332"/>
    </location>
</feature>
<feature type="splice variant" id="VSP_054435" description="In isoform 3." evidence="16">
    <location>
        <begin position="333"/>
        <end position="793"/>
    </location>
</feature>
<feature type="sequence variant" id="VAR_031247" description="In dbSNP:rs6729801." evidence="8 10">
    <original>D</original>
    <variation>N</variation>
    <location>
        <position position="76"/>
    </location>
</feature>
<feature type="sequence variant" id="VAR_048912" description="In dbSNP:rs13414223.">
    <original>L</original>
    <variation>I</variation>
    <location>
        <position position="347"/>
    </location>
</feature>
<feature type="sequence variant" id="VAR_031248" description="In dbSNP:rs11681366.">
    <original>Y</original>
    <variation>C</variation>
    <location>
        <position position="414"/>
    </location>
</feature>
<feature type="sequence variant" id="VAR_031249" description="In dbSNP:rs288334." evidence="7 9 10">
    <original>H</original>
    <variation>Q</variation>
    <location>
        <position position="646"/>
    </location>
</feature>
<feature type="mutagenesis site" description="Prevents interaction with HSPA5, leading to prolonged interaction with substrate proteins." evidence="13">
    <original>H</original>
    <variation>Q</variation>
    <location>
        <position position="63"/>
    </location>
</feature>
<feature type="mutagenesis site" description="Abolishes disulfide reductase activity; when associated with A-483; A-591 and A-703." evidence="13">
    <original>C</original>
    <variation>A</variation>
    <location>
        <position position="161"/>
    </location>
</feature>
<feature type="mutagenesis site" description="Abolishes disulfide reductase activity; when associated with A-161; A-591 and A-703." evidence="13">
    <original>C</original>
    <variation>A</variation>
    <location>
        <position position="483"/>
    </location>
</feature>
<feature type="mutagenesis site" description="Abolishes disulfide reductase activity; when associated with A-161; A-483 and A-703." evidence="13">
    <original>C</original>
    <variation>A</variation>
    <location>
        <position position="591"/>
    </location>
</feature>
<feature type="mutagenesis site" description="Abolishes disulfide reductase activity; when associated with A-161; A-483 and A-591." evidence="13">
    <original>C</original>
    <variation>A</variation>
    <location>
        <position position="703"/>
    </location>
</feature>
<feature type="sequence conflict" description="In Ref. 2; AAM09527 and 4; BAB55304." evidence="17" ref="2 4">
    <original>L</original>
    <variation>S</variation>
    <location>
        <position position="5"/>
    </location>
</feature>
<feature type="sequence conflict" description="In Ref. 1; AAN73271." evidence="17" ref="1">
    <original>P</original>
    <variation>A</variation>
    <location>
        <position position="213"/>
    </location>
</feature>
<feature type="sequence conflict" description="In Ref. 1; AAN73271." evidence="17" ref="1">
    <original>NTLE</original>
    <variation>KRVK</variation>
    <location>
        <begin position="356"/>
        <end position="359"/>
    </location>
</feature>
<feature type="sequence conflict" description="In Ref. 4; BAB55121." evidence="17" ref="4">
    <original>F</original>
    <variation>S</variation>
    <location>
        <position position="446"/>
    </location>
</feature>
<feature type="sequence conflict" description="In Ref. 8; CAD89982." evidence="17" ref="8">
    <original>T</original>
    <variation>A</variation>
    <location>
        <position position="565"/>
    </location>
</feature>
<feature type="sequence conflict" description="In Ref. 8; CAB70858." evidence="17" ref="8">
    <original>E</original>
    <variation>K</variation>
    <location>
        <position position="633"/>
    </location>
</feature>
<feature type="sequence conflict" description="In Ref. 4; BAB55304." evidence="17" ref="4">
    <original>K</original>
    <variation>N</variation>
    <location>
        <position position="755"/>
    </location>
</feature>
<feature type="sequence conflict" description="In Ref. 8; CAD89982." evidence="17" ref="8">
    <original>I</original>
    <variation>T</variation>
    <location>
        <position position="771"/>
    </location>
</feature>
<comment type="function">
    <text evidence="6 11 12 13">Endoplasmic reticulum disulfide reductase involved both in the correct folding of proteins and degradation of misfolded proteins. Required for efficient folding of proteins in the endoplasmic reticulum by catalyzing the removal of non-native disulfide bonds formed during the folding of proteins, such as LDLR. Also involved in endoplasmic reticulum-associated degradation (ERAD) by reducing incorrect disulfide bonds in misfolded glycoproteins recognized by EDEM1. Interaction with HSPA5 is required its activity, not for the disulfide reductase activity, but to facilitate the release of DNAJC10 from its substrate. Promotes apoptotic signaling pathway in response to endoplasmic reticulum stress.</text>
</comment>
<comment type="subunit">
    <text evidence="1 6 13">Interacts with EDEM1 (By similarity). Interacts with HSPA5 (via its J domain).</text>
</comment>
<comment type="interaction">
    <interactant intactId="EBI-2949763">
        <id>Q8IXB1</id>
    </interactant>
    <interactant intactId="EBI-10763361">
        <id>Q8IWF2</id>
        <label>FOXRED2</label>
    </interactant>
    <organismsDiffer>false</organismsDiffer>
    <experiments>2</experiments>
</comment>
<comment type="interaction">
    <interactant intactId="EBI-10262451">
        <id>Q8IXB1-2</id>
    </interactant>
    <interactant intactId="EBI-10178634">
        <id>P43364-2</id>
        <label>MAGEA11</label>
    </interactant>
    <organismsDiffer>false</organismsDiffer>
    <experiments>3</experiments>
</comment>
<comment type="subcellular location">
    <subcellularLocation>
        <location evidence="5 6 13">Endoplasmic reticulum lumen</location>
    </subcellularLocation>
</comment>
<comment type="alternative products">
    <event type="alternative splicing"/>
    <isoform>
        <id>Q8IXB1-1</id>
        <name>1</name>
        <sequence type="displayed"/>
    </isoform>
    <isoform>
        <id>Q8IXB1-2</id>
        <name>2</name>
        <sequence type="described" ref="VSP_024011"/>
    </isoform>
    <isoform>
        <id>Q8IXB1-3</id>
        <name>3</name>
        <sequence type="described" ref="VSP_054434 VSP_054435"/>
    </isoform>
</comment>
<comment type="induction">
    <text>By endoplasmic reticulum stress.</text>
</comment>
<comment type="domain">
    <text evidence="1">The thioredoxin-like regions Trxb 1 and 2 lack a redox-active CXXC motif.</text>
</comment>
<comment type="domain">
    <text evidence="1">Thioredoxin domains 3 and 4 are the primary reductase domains.</text>
</comment>
<comment type="sequence caution" evidence="17">
    <conflict type="erroneous initiation">
        <sequence resource="EMBL-CDS" id="BAB55121"/>
    </conflict>
    <text>Truncated N-terminus.</text>
</comment>
<comment type="sequence caution" evidence="17">
    <conflict type="erroneous initiation">
        <sequence resource="EMBL-CDS" id="BAC11281"/>
    </conflict>
    <text>Truncated N-terminus.</text>
</comment>